<proteinExistence type="evidence at protein level"/>
<keyword id="KW-0963">Cytoplasm</keyword>
<keyword id="KW-0251">Elongation factor</keyword>
<keyword id="KW-0342">GTP-binding</keyword>
<keyword id="KW-0378">Hydrolase</keyword>
<keyword id="KW-0460">Magnesium</keyword>
<keyword id="KW-0479">Metal-binding</keyword>
<keyword id="KW-0547">Nucleotide-binding</keyword>
<keyword id="KW-0597">Phosphoprotein</keyword>
<keyword id="KW-0648">Protein biosynthesis</keyword>
<keyword id="KW-1185">Reference proteome</keyword>
<dbReference type="EC" id="3.6.5.3" evidence="3"/>
<dbReference type="EMBL" id="D64127">
    <property type="protein sequence ID" value="BAA11004.1"/>
    <property type="molecule type" value="Genomic_DNA"/>
</dbReference>
<dbReference type="EMBL" id="AL009126">
    <property type="protein sequence ID" value="CAB11889.1"/>
    <property type="molecule type" value="Genomic_DNA"/>
</dbReference>
<dbReference type="PIR" id="A60663">
    <property type="entry name" value="A60663"/>
</dbReference>
<dbReference type="RefSeq" id="NP_387994.1">
    <property type="nucleotide sequence ID" value="NC_000964.3"/>
</dbReference>
<dbReference type="RefSeq" id="WP_003235058.1">
    <property type="nucleotide sequence ID" value="NZ_OZ025638.1"/>
</dbReference>
<dbReference type="SMR" id="P33166"/>
<dbReference type="DIP" id="DIP-52428N"/>
<dbReference type="FunCoup" id="P33166">
    <property type="interactions" value="721"/>
</dbReference>
<dbReference type="IntAct" id="P33166">
    <property type="interactions" value="7"/>
</dbReference>
<dbReference type="MINT" id="P33166"/>
<dbReference type="STRING" id="224308.BSU01130"/>
<dbReference type="iPTMnet" id="P33166"/>
<dbReference type="jPOST" id="P33166"/>
<dbReference type="PaxDb" id="224308-BSU01130"/>
<dbReference type="EnsemblBacteria" id="CAB11889">
    <property type="protein sequence ID" value="CAB11889"/>
    <property type="gene ID" value="BSU_01130"/>
</dbReference>
<dbReference type="GeneID" id="935965"/>
<dbReference type="KEGG" id="bsu:BSU01130"/>
<dbReference type="PATRIC" id="fig|224308.179.peg.116"/>
<dbReference type="eggNOG" id="COG0050">
    <property type="taxonomic scope" value="Bacteria"/>
</dbReference>
<dbReference type="InParanoid" id="P33166"/>
<dbReference type="OrthoDB" id="9804504at2"/>
<dbReference type="PhylomeDB" id="P33166"/>
<dbReference type="BioCyc" id="BSUB:BSU01130-MONOMER"/>
<dbReference type="Proteomes" id="UP000001570">
    <property type="component" value="Chromosome"/>
</dbReference>
<dbReference type="GO" id="GO:0005737">
    <property type="term" value="C:cytoplasm"/>
    <property type="evidence" value="ECO:0007669"/>
    <property type="project" value="UniProtKB-SubCell"/>
</dbReference>
<dbReference type="GO" id="GO:0005525">
    <property type="term" value="F:GTP binding"/>
    <property type="evidence" value="ECO:0007669"/>
    <property type="project" value="UniProtKB-UniRule"/>
</dbReference>
<dbReference type="GO" id="GO:0003924">
    <property type="term" value="F:GTPase activity"/>
    <property type="evidence" value="ECO:0007669"/>
    <property type="project" value="InterPro"/>
</dbReference>
<dbReference type="GO" id="GO:0003746">
    <property type="term" value="F:translation elongation factor activity"/>
    <property type="evidence" value="ECO:0000318"/>
    <property type="project" value="GO_Central"/>
</dbReference>
<dbReference type="GO" id="GO:0006414">
    <property type="term" value="P:translational elongation"/>
    <property type="evidence" value="ECO:0000318"/>
    <property type="project" value="GO_Central"/>
</dbReference>
<dbReference type="CDD" id="cd01884">
    <property type="entry name" value="EF_Tu"/>
    <property type="match status" value="1"/>
</dbReference>
<dbReference type="CDD" id="cd03697">
    <property type="entry name" value="EFTU_II"/>
    <property type="match status" value="1"/>
</dbReference>
<dbReference type="CDD" id="cd03707">
    <property type="entry name" value="EFTU_III"/>
    <property type="match status" value="1"/>
</dbReference>
<dbReference type="FunFam" id="2.40.30.10:FF:000001">
    <property type="entry name" value="Elongation factor Tu"/>
    <property type="match status" value="1"/>
</dbReference>
<dbReference type="FunFam" id="3.40.50.300:FF:000003">
    <property type="entry name" value="Elongation factor Tu"/>
    <property type="match status" value="1"/>
</dbReference>
<dbReference type="Gene3D" id="3.40.50.300">
    <property type="entry name" value="P-loop containing nucleotide triphosphate hydrolases"/>
    <property type="match status" value="1"/>
</dbReference>
<dbReference type="Gene3D" id="2.40.30.10">
    <property type="entry name" value="Translation factors"/>
    <property type="match status" value="2"/>
</dbReference>
<dbReference type="HAMAP" id="MF_00118_B">
    <property type="entry name" value="EF_Tu_B"/>
    <property type="match status" value="1"/>
</dbReference>
<dbReference type="InterPro" id="IPR041709">
    <property type="entry name" value="EF-Tu_GTP-bd"/>
</dbReference>
<dbReference type="InterPro" id="IPR050055">
    <property type="entry name" value="EF-Tu_GTPase"/>
</dbReference>
<dbReference type="InterPro" id="IPR004161">
    <property type="entry name" value="EFTu-like_2"/>
</dbReference>
<dbReference type="InterPro" id="IPR033720">
    <property type="entry name" value="EFTU_2"/>
</dbReference>
<dbReference type="InterPro" id="IPR031157">
    <property type="entry name" value="G_TR_CS"/>
</dbReference>
<dbReference type="InterPro" id="IPR027417">
    <property type="entry name" value="P-loop_NTPase"/>
</dbReference>
<dbReference type="InterPro" id="IPR005225">
    <property type="entry name" value="Small_GTP-bd"/>
</dbReference>
<dbReference type="InterPro" id="IPR000795">
    <property type="entry name" value="T_Tr_GTP-bd_dom"/>
</dbReference>
<dbReference type="InterPro" id="IPR009000">
    <property type="entry name" value="Transl_B-barrel_sf"/>
</dbReference>
<dbReference type="InterPro" id="IPR009001">
    <property type="entry name" value="Transl_elong_EF1A/Init_IF2_C"/>
</dbReference>
<dbReference type="InterPro" id="IPR004541">
    <property type="entry name" value="Transl_elong_EFTu/EF1A_bac/org"/>
</dbReference>
<dbReference type="InterPro" id="IPR004160">
    <property type="entry name" value="Transl_elong_EFTu/EF1A_C"/>
</dbReference>
<dbReference type="NCBIfam" id="TIGR00485">
    <property type="entry name" value="EF-Tu"/>
    <property type="match status" value="1"/>
</dbReference>
<dbReference type="NCBIfam" id="NF000766">
    <property type="entry name" value="PRK00049.1"/>
    <property type="match status" value="1"/>
</dbReference>
<dbReference type="NCBIfam" id="NF009372">
    <property type="entry name" value="PRK12735.1"/>
    <property type="match status" value="1"/>
</dbReference>
<dbReference type="NCBIfam" id="NF009373">
    <property type="entry name" value="PRK12736.1"/>
    <property type="match status" value="1"/>
</dbReference>
<dbReference type="NCBIfam" id="TIGR00231">
    <property type="entry name" value="small_GTP"/>
    <property type="match status" value="1"/>
</dbReference>
<dbReference type="PANTHER" id="PTHR43721:SF22">
    <property type="entry name" value="ELONGATION FACTOR TU, MITOCHONDRIAL"/>
    <property type="match status" value="1"/>
</dbReference>
<dbReference type="PANTHER" id="PTHR43721">
    <property type="entry name" value="ELONGATION FACTOR TU-RELATED"/>
    <property type="match status" value="1"/>
</dbReference>
<dbReference type="Pfam" id="PF00009">
    <property type="entry name" value="GTP_EFTU"/>
    <property type="match status" value="1"/>
</dbReference>
<dbReference type="Pfam" id="PF03144">
    <property type="entry name" value="GTP_EFTU_D2"/>
    <property type="match status" value="1"/>
</dbReference>
<dbReference type="Pfam" id="PF03143">
    <property type="entry name" value="GTP_EFTU_D3"/>
    <property type="match status" value="1"/>
</dbReference>
<dbReference type="PRINTS" id="PR00315">
    <property type="entry name" value="ELONGATNFCT"/>
</dbReference>
<dbReference type="SUPFAM" id="SSF50465">
    <property type="entry name" value="EF-Tu/eEF-1alpha/eIF2-gamma C-terminal domain"/>
    <property type="match status" value="1"/>
</dbReference>
<dbReference type="SUPFAM" id="SSF52540">
    <property type="entry name" value="P-loop containing nucleoside triphosphate hydrolases"/>
    <property type="match status" value="1"/>
</dbReference>
<dbReference type="SUPFAM" id="SSF50447">
    <property type="entry name" value="Translation proteins"/>
    <property type="match status" value="1"/>
</dbReference>
<dbReference type="PROSITE" id="PS00301">
    <property type="entry name" value="G_TR_1"/>
    <property type="match status" value="1"/>
</dbReference>
<dbReference type="PROSITE" id="PS51722">
    <property type="entry name" value="G_TR_2"/>
    <property type="match status" value="1"/>
</dbReference>
<accession>P33166</accession>
<name>EFTU_BACSU</name>
<comment type="function">
    <text evidence="3">GTP hydrolase that promotes the GTP-dependent binding of aminoacyl-tRNA to the A-site of ribosomes during protein biosynthesis.</text>
</comment>
<comment type="catalytic activity">
    <reaction evidence="3">
        <text>GTP + H2O = GDP + phosphate + H(+)</text>
        <dbReference type="Rhea" id="RHEA:19669"/>
        <dbReference type="ChEBI" id="CHEBI:15377"/>
        <dbReference type="ChEBI" id="CHEBI:15378"/>
        <dbReference type="ChEBI" id="CHEBI:37565"/>
        <dbReference type="ChEBI" id="CHEBI:43474"/>
        <dbReference type="ChEBI" id="CHEBI:58189"/>
        <dbReference type="EC" id="3.6.5.3"/>
    </reaction>
    <physiologicalReaction direction="left-to-right" evidence="3">
        <dbReference type="Rhea" id="RHEA:19670"/>
    </physiologicalReaction>
</comment>
<comment type="subunit">
    <text evidence="2 5">Monomer (By similarity). Interacts with BrxC (PubMed:33722570).</text>
</comment>
<comment type="interaction">
    <interactant intactId="EBI-2122675">
        <id>P33166</id>
    </interactant>
    <interactant intactId="EBI-2122805">
        <id>P39751</id>
        <label>mbl</label>
    </interactant>
    <organismsDiffer>false</organismsDiffer>
    <experiments>3</experiments>
</comment>
<comment type="interaction">
    <interactant intactId="EBI-2122675">
        <id>P33166</id>
    </interactant>
    <interactant intactId="EBI-6406749">
        <id>Q01465</id>
        <label>mreB</label>
    </interactant>
    <organismsDiffer>false</organismsDiffer>
    <experiments>6</experiments>
</comment>
<comment type="subcellular location">
    <subcellularLocation>
        <location>Cytoplasm</location>
    </subcellularLocation>
</comment>
<comment type="PTM">
    <text evidence="4">Phosphorylated on Thr-385 in vitro by PrkC in the presence of poly-L-lysine or myelin basic protein, dephosphorylated by PrpC.</text>
</comment>
<comment type="similarity">
    <text evidence="3">Belongs to the TRAFAC class translation factor GTPase superfamily. Classic translation factor GTPase family. EF-Tu/EF-1A subfamily.</text>
</comment>
<organism>
    <name type="scientific">Bacillus subtilis (strain 168)</name>
    <dbReference type="NCBI Taxonomy" id="224308"/>
    <lineage>
        <taxon>Bacteria</taxon>
        <taxon>Bacillati</taxon>
        <taxon>Bacillota</taxon>
        <taxon>Bacilli</taxon>
        <taxon>Bacillales</taxon>
        <taxon>Bacillaceae</taxon>
        <taxon>Bacillus</taxon>
    </lineage>
</organism>
<gene>
    <name evidence="3" type="primary">tuf</name>
    <name type="synonym">tufA</name>
    <name type="ordered locus">BSU01130</name>
</gene>
<evidence type="ECO:0000250" key="1"/>
<evidence type="ECO:0000250" key="2">
    <source>
        <dbReference type="UniProtKB" id="P0CE48"/>
    </source>
</evidence>
<evidence type="ECO:0000255" key="3">
    <source>
        <dbReference type="HAMAP-Rule" id="MF_00118"/>
    </source>
</evidence>
<evidence type="ECO:0000269" key="4">
    <source>
    </source>
</evidence>
<evidence type="ECO:0000269" key="5">
    <source>
    </source>
</evidence>
<evidence type="ECO:0000303" key="6">
    <source>
    </source>
</evidence>
<evidence type="ECO:0000305" key="7">
    <source>
    </source>
</evidence>
<sequence>MAKEKFDRSKSHANIGTIGHVDHGKTTLTAAITTVLHKKSGKGTAMAYDQIDGAPEERERGITISTAHVEYETETRHYAHVDCPGHADYVKNMITGAAQMDGAILVVSAADGPMPQTREHILLSKNVGVPYIVVFLNKCDMVDDEELLELVEMEVRDLLSEYDFPGDDVPVVKGSALKALEGDAEWEAKIFELMDAVDEYIPTPERDTEKPFMMPVEDVFSITGRGTVATGRVERGQVKVGDEVEIIGLQEENKKTTVTGVEMFRKLLDYAEAGDNIGALLRGVSREEIQRGQVLAKPGTITPHSKFKAEVYVLSKEEGGRHTPFFSNYRPQFYFRTTDVTGIIHLPEGVEMVMPGDNTEMNVELISTIAIEEGTRFSIREGGRTVGSGVVSTITE</sequence>
<feature type="chain" id="PRO_0000091291" description="Elongation factor Tu">
    <location>
        <begin position="1"/>
        <end position="396"/>
    </location>
</feature>
<feature type="domain" description="tr-type G">
    <location>
        <begin position="10"/>
        <end position="205"/>
    </location>
</feature>
<feature type="region of interest" description="G1" evidence="1">
    <location>
        <begin position="19"/>
        <end position="26"/>
    </location>
</feature>
<feature type="region of interest" description="G2" evidence="1">
    <location>
        <begin position="61"/>
        <end position="65"/>
    </location>
</feature>
<feature type="region of interest" description="G3" evidence="1">
    <location>
        <begin position="82"/>
        <end position="85"/>
    </location>
</feature>
<feature type="region of interest" description="G4" evidence="1">
    <location>
        <begin position="137"/>
        <end position="140"/>
    </location>
</feature>
<feature type="region of interest" description="G5" evidence="1">
    <location>
        <begin position="175"/>
        <end position="177"/>
    </location>
</feature>
<feature type="binding site" evidence="3">
    <location>
        <begin position="19"/>
        <end position="26"/>
    </location>
    <ligand>
        <name>GTP</name>
        <dbReference type="ChEBI" id="CHEBI:37565"/>
    </ligand>
</feature>
<feature type="binding site" evidence="3">
    <location>
        <position position="26"/>
    </location>
    <ligand>
        <name>Mg(2+)</name>
        <dbReference type="ChEBI" id="CHEBI:18420"/>
    </ligand>
</feature>
<feature type="binding site" evidence="3">
    <location>
        <begin position="82"/>
        <end position="86"/>
    </location>
    <ligand>
        <name>GTP</name>
        <dbReference type="ChEBI" id="CHEBI:37565"/>
    </ligand>
</feature>
<feature type="binding site" evidence="3">
    <location>
        <begin position="137"/>
        <end position="140"/>
    </location>
    <ligand>
        <name>GTP</name>
        <dbReference type="ChEBI" id="CHEBI:37565"/>
    </ligand>
</feature>
<feature type="modified residue" description="Phosphothreonine" evidence="7">
    <location>
        <position position="385"/>
    </location>
</feature>
<feature type="mutagenesis site" description="Not phosphorylated by PrkC in vitro." evidence="4">
    <original>T</original>
    <variation>V</variation>
    <location>
        <position position="385"/>
    </location>
</feature>
<reference key="1">
    <citation type="journal article" date="1990" name="Arch. Microbiol.">
        <title>Complete nucleotide sequences of seven eubacterial genes coding for the elongation factor Tu: functional, structural and phylogenetic evaluations.</title>
        <authorList>
            <person name="Ludwig W."/>
            <person name="Weizenegger M."/>
            <person name="Betzl D."/>
            <person name="Leidel E."/>
            <person name="Lenz T."/>
            <person name="Ludvigsen A."/>
            <person name="Moellenhoff D."/>
            <person name="Wenzig P."/>
            <person name="Schleifer K.H."/>
        </authorList>
    </citation>
    <scope>NUCLEOTIDE SEQUENCE [GENOMIC DNA]</scope>
</reference>
<reference key="2">
    <citation type="journal article" date="1996" name="Microbiology">
        <title>Sequence analysis of a 50 kb region between spo0H and rrnH on the Bacillus subtilis chromosome.</title>
        <authorList>
            <person name="Yasumoto K."/>
            <person name="Liu H."/>
            <person name="Jeong S.M."/>
            <person name="Ohashi Y."/>
            <person name="Kakinuma S."/>
            <person name="Tanaka K."/>
            <person name="Kawamura F."/>
            <person name="Yoshikawa H."/>
            <person name="Takahashi H."/>
        </authorList>
    </citation>
    <scope>NUCLEOTIDE SEQUENCE [GENOMIC DNA]</scope>
    <source>
        <strain>168</strain>
    </source>
</reference>
<reference key="3">
    <citation type="journal article" date="1997" name="Nature">
        <title>The complete genome sequence of the Gram-positive bacterium Bacillus subtilis.</title>
        <authorList>
            <person name="Kunst F."/>
            <person name="Ogasawara N."/>
            <person name="Moszer I."/>
            <person name="Albertini A.M."/>
            <person name="Alloni G."/>
            <person name="Azevedo V."/>
            <person name="Bertero M.G."/>
            <person name="Bessieres P."/>
            <person name="Bolotin A."/>
            <person name="Borchert S."/>
            <person name="Borriss R."/>
            <person name="Boursier L."/>
            <person name="Brans A."/>
            <person name="Braun M."/>
            <person name="Brignell S.C."/>
            <person name="Bron S."/>
            <person name="Brouillet S."/>
            <person name="Bruschi C.V."/>
            <person name="Caldwell B."/>
            <person name="Capuano V."/>
            <person name="Carter N.M."/>
            <person name="Choi S.-K."/>
            <person name="Codani J.-J."/>
            <person name="Connerton I.F."/>
            <person name="Cummings N.J."/>
            <person name="Daniel R.A."/>
            <person name="Denizot F."/>
            <person name="Devine K.M."/>
            <person name="Duesterhoeft A."/>
            <person name="Ehrlich S.D."/>
            <person name="Emmerson P.T."/>
            <person name="Entian K.-D."/>
            <person name="Errington J."/>
            <person name="Fabret C."/>
            <person name="Ferrari E."/>
            <person name="Foulger D."/>
            <person name="Fritz C."/>
            <person name="Fujita M."/>
            <person name="Fujita Y."/>
            <person name="Fuma S."/>
            <person name="Galizzi A."/>
            <person name="Galleron N."/>
            <person name="Ghim S.-Y."/>
            <person name="Glaser P."/>
            <person name="Goffeau A."/>
            <person name="Golightly E.J."/>
            <person name="Grandi G."/>
            <person name="Guiseppi G."/>
            <person name="Guy B.J."/>
            <person name="Haga K."/>
            <person name="Haiech J."/>
            <person name="Harwood C.R."/>
            <person name="Henaut A."/>
            <person name="Hilbert H."/>
            <person name="Holsappel S."/>
            <person name="Hosono S."/>
            <person name="Hullo M.-F."/>
            <person name="Itaya M."/>
            <person name="Jones L.-M."/>
            <person name="Joris B."/>
            <person name="Karamata D."/>
            <person name="Kasahara Y."/>
            <person name="Klaerr-Blanchard M."/>
            <person name="Klein C."/>
            <person name="Kobayashi Y."/>
            <person name="Koetter P."/>
            <person name="Koningstein G."/>
            <person name="Krogh S."/>
            <person name="Kumano M."/>
            <person name="Kurita K."/>
            <person name="Lapidus A."/>
            <person name="Lardinois S."/>
            <person name="Lauber J."/>
            <person name="Lazarevic V."/>
            <person name="Lee S.-M."/>
            <person name="Levine A."/>
            <person name="Liu H."/>
            <person name="Masuda S."/>
            <person name="Mauel C."/>
            <person name="Medigue C."/>
            <person name="Medina N."/>
            <person name="Mellado R.P."/>
            <person name="Mizuno M."/>
            <person name="Moestl D."/>
            <person name="Nakai S."/>
            <person name="Noback M."/>
            <person name="Noone D."/>
            <person name="O'Reilly M."/>
            <person name="Ogawa K."/>
            <person name="Ogiwara A."/>
            <person name="Oudega B."/>
            <person name="Park S.-H."/>
            <person name="Parro V."/>
            <person name="Pohl T.M."/>
            <person name="Portetelle D."/>
            <person name="Porwollik S."/>
            <person name="Prescott A.M."/>
            <person name="Presecan E."/>
            <person name="Pujic P."/>
            <person name="Purnelle B."/>
            <person name="Rapoport G."/>
            <person name="Rey M."/>
            <person name="Reynolds S."/>
            <person name="Rieger M."/>
            <person name="Rivolta C."/>
            <person name="Rocha E."/>
            <person name="Roche B."/>
            <person name="Rose M."/>
            <person name="Sadaie Y."/>
            <person name="Sato T."/>
            <person name="Scanlan E."/>
            <person name="Schleich S."/>
            <person name="Schroeter R."/>
            <person name="Scoffone F."/>
            <person name="Sekiguchi J."/>
            <person name="Sekowska A."/>
            <person name="Seror S.J."/>
            <person name="Serror P."/>
            <person name="Shin B.-S."/>
            <person name="Soldo B."/>
            <person name="Sorokin A."/>
            <person name="Tacconi E."/>
            <person name="Takagi T."/>
            <person name="Takahashi H."/>
            <person name="Takemaru K."/>
            <person name="Takeuchi M."/>
            <person name="Tamakoshi A."/>
            <person name="Tanaka T."/>
            <person name="Terpstra P."/>
            <person name="Tognoni A."/>
            <person name="Tosato V."/>
            <person name="Uchiyama S."/>
            <person name="Vandenbol M."/>
            <person name="Vannier F."/>
            <person name="Vassarotti A."/>
            <person name="Viari A."/>
            <person name="Wambutt R."/>
            <person name="Wedler E."/>
            <person name="Wedler H."/>
            <person name="Weitzenegger T."/>
            <person name="Winters P."/>
            <person name="Wipat A."/>
            <person name="Yamamoto H."/>
            <person name="Yamane K."/>
            <person name="Yasumoto K."/>
            <person name="Yata K."/>
            <person name="Yoshida K."/>
            <person name="Yoshikawa H.-F."/>
            <person name="Zumstein E."/>
            <person name="Yoshikawa H."/>
            <person name="Danchin A."/>
        </authorList>
    </citation>
    <scope>NUCLEOTIDE SEQUENCE [LARGE SCALE GENOMIC DNA]</scope>
    <source>
        <strain>168</strain>
    </source>
</reference>
<reference key="4">
    <citation type="journal article" date="2009" name="Microbiology">
        <title>CpgA, EF-Tu and the stressosome protein YezB are substrates of the Ser/Thr kinase/phosphatase couple, PrkC/PrpC, in Bacillus subtilis.</title>
        <authorList>
            <person name="Absalon C."/>
            <person name="Obuchowski M."/>
            <person name="Madec E."/>
            <person name="Delattre D."/>
            <person name="Holland I.B."/>
            <person name="Seror S.J."/>
        </authorList>
    </citation>
    <scope>PHOSPHORYLATION AT THR-385</scope>
    <scope>MUTAGENESIS OF THR-385</scope>
    <source>
        <strain>168</strain>
    </source>
</reference>
<reference key="5">
    <citation type="journal article" date="2021" name="Redox Biol.">
        <title>The Bacillus subtilis monothiol bacilliredoxin BrxC (YtxJ) and the Bdr (YpdA) disulfide reductase reduce S-bacillithiolated proteins.</title>
        <authorList>
            <person name="Gaballa A."/>
            <person name="Su T.T."/>
            <person name="Helmann J.D."/>
        </authorList>
    </citation>
    <scope>INTERACTION WITH BRXC</scope>
    <scope>IDENTIFICATION BY MASS SPECTROMETRY</scope>
    <source>
        <strain evidence="6">168 / CU1065</strain>
    </source>
</reference>
<protein>
    <recommendedName>
        <fullName evidence="3">Elongation factor Tu</fullName>
        <shortName evidence="3">EF-Tu</shortName>
        <ecNumber evidence="3">3.6.5.3</ecNumber>
    </recommendedName>
    <alternativeName>
        <fullName>P-40</fullName>
    </alternativeName>
</protein>